<reference key="1">
    <citation type="journal article" date="2006" name="J. Bacteriol.">
        <title>The genome of the obligately intracellular bacterium Ehrlichia canis reveals themes of complex membrane structure and immune evasion strategies.</title>
        <authorList>
            <person name="Mavromatis K."/>
            <person name="Doyle C.K."/>
            <person name="Lykidis A."/>
            <person name="Ivanova N."/>
            <person name="Francino M.P."/>
            <person name="Chain P."/>
            <person name="Shin M."/>
            <person name="Malfatti S."/>
            <person name="Larimer F."/>
            <person name="Copeland A."/>
            <person name="Detter J.C."/>
            <person name="Land M."/>
            <person name="Richardson P.M."/>
            <person name="Yu X.J."/>
            <person name="Walker D.H."/>
            <person name="McBride J.W."/>
            <person name="Kyrpides N.C."/>
        </authorList>
    </citation>
    <scope>NUCLEOTIDE SEQUENCE [LARGE SCALE GENOMIC DNA]</scope>
    <source>
        <strain>Jake</strain>
    </source>
</reference>
<dbReference type="EMBL" id="CP000107">
    <property type="protein sequence ID" value="AAZ68645.1"/>
    <property type="molecule type" value="Genomic_DNA"/>
</dbReference>
<dbReference type="RefSeq" id="WP_011304723.1">
    <property type="nucleotide sequence ID" value="NC_007354.1"/>
</dbReference>
<dbReference type="SMR" id="Q3YRL0"/>
<dbReference type="FunCoup" id="Q3YRL0">
    <property type="interactions" value="364"/>
</dbReference>
<dbReference type="STRING" id="269484.Ecaj_0611"/>
<dbReference type="KEGG" id="ecn:Ecaj_0611"/>
<dbReference type="eggNOG" id="COG0088">
    <property type="taxonomic scope" value="Bacteria"/>
</dbReference>
<dbReference type="HOGENOM" id="CLU_041575_5_1_5"/>
<dbReference type="InParanoid" id="Q3YRL0"/>
<dbReference type="Proteomes" id="UP000000435">
    <property type="component" value="Chromosome"/>
</dbReference>
<dbReference type="GO" id="GO:1990904">
    <property type="term" value="C:ribonucleoprotein complex"/>
    <property type="evidence" value="ECO:0007669"/>
    <property type="project" value="UniProtKB-KW"/>
</dbReference>
<dbReference type="GO" id="GO:0005840">
    <property type="term" value="C:ribosome"/>
    <property type="evidence" value="ECO:0007669"/>
    <property type="project" value="UniProtKB-KW"/>
</dbReference>
<dbReference type="GO" id="GO:0019843">
    <property type="term" value="F:rRNA binding"/>
    <property type="evidence" value="ECO:0007669"/>
    <property type="project" value="UniProtKB-UniRule"/>
</dbReference>
<dbReference type="GO" id="GO:0003735">
    <property type="term" value="F:structural constituent of ribosome"/>
    <property type="evidence" value="ECO:0007669"/>
    <property type="project" value="InterPro"/>
</dbReference>
<dbReference type="GO" id="GO:0006412">
    <property type="term" value="P:translation"/>
    <property type="evidence" value="ECO:0007669"/>
    <property type="project" value="UniProtKB-UniRule"/>
</dbReference>
<dbReference type="Gene3D" id="3.40.1370.10">
    <property type="match status" value="1"/>
</dbReference>
<dbReference type="HAMAP" id="MF_01328_B">
    <property type="entry name" value="Ribosomal_uL4_B"/>
    <property type="match status" value="1"/>
</dbReference>
<dbReference type="InterPro" id="IPR002136">
    <property type="entry name" value="Ribosomal_uL4"/>
</dbReference>
<dbReference type="InterPro" id="IPR013005">
    <property type="entry name" value="Ribosomal_uL4-like"/>
</dbReference>
<dbReference type="InterPro" id="IPR023574">
    <property type="entry name" value="Ribosomal_uL4_dom_sf"/>
</dbReference>
<dbReference type="NCBIfam" id="TIGR03953">
    <property type="entry name" value="rplD_bact"/>
    <property type="match status" value="1"/>
</dbReference>
<dbReference type="PANTHER" id="PTHR10746">
    <property type="entry name" value="50S RIBOSOMAL PROTEIN L4"/>
    <property type="match status" value="1"/>
</dbReference>
<dbReference type="PANTHER" id="PTHR10746:SF6">
    <property type="entry name" value="LARGE RIBOSOMAL SUBUNIT PROTEIN UL4M"/>
    <property type="match status" value="1"/>
</dbReference>
<dbReference type="Pfam" id="PF00573">
    <property type="entry name" value="Ribosomal_L4"/>
    <property type="match status" value="1"/>
</dbReference>
<dbReference type="SUPFAM" id="SSF52166">
    <property type="entry name" value="Ribosomal protein L4"/>
    <property type="match status" value="1"/>
</dbReference>
<organism>
    <name type="scientific">Ehrlichia canis (strain Jake)</name>
    <dbReference type="NCBI Taxonomy" id="269484"/>
    <lineage>
        <taxon>Bacteria</taxon>
        <taxon>Pseudomonadati</taxon>
        <taxon>Pseudomonadota</taxon>
        <taxon>Alphaproteobacteria</taxon>
        <taxon>Rickettsiales</taxon>
        <taxon>Anaplasmataceae</taxon>
        <taxon>Ehrlichia</taxon>
    </lineage>
</organism>
<keyword id="KW-0687">Ribonucleoprotein</keyword>
<keyword id="KW-0689">Ribosomal protein</keyword>
<keyword id="KW-0694">RNA-binding</keyword>
<keyword id="KW-0699">rRNA-binding</keyword>
<protein>
    <recommendedName>
        <fullName evidence="1">Large ribosomal subunit protein uL4</fullName>
    </recommendedName>
    <alternativeName>
        <fullName evidence="3">50S ribosomal protein L4</fullName>
    </alternativeName>
</protein>
<gene>
    <name evidence="1" type="primary">rplD</name>
    <name type="ordered locus">Ecaj_0611</name>
</gene>
<evidence type="ECO:0000255" key="1">
    <source>
        <dbReference type="HAMAP-Rule" id="MF_01328"/>
    </source>
</evidence>
<evidence type="ECO:0000256" key="2">
    <source>
        <dbReference type="SAM" id="MobiDB-lite"/>
    </source>
</evidence>
<evidence type="ECO:0000305" key="3"/>
<name>RL4_EHRCJ</name>
<accession>Q3YRL0</accession>
<comment type="function">
    <text evidence="1">One of the primary rRNA binding proteins, this protein initially binds near the 5'-end of the 23S rRNA. It is important during the early stages of 50S assembly. It makes multiple contacts with different domains of the 23S rRNA in the assembled 50S subunit and ribosome.</text>
</comment>
<comment type="function">
    <text evidence="1">Forms part of the polypeptide exit tunnel.</text>
</comment>
<comment type="subunit">
    <text evidence="1">Part of the 50S ribosomal subunit.</text>
</comment>
<comment type="similarity">
    <text evidence="1">Belongs to the universal ribosomal protein uL4 family.</text>
</comment>
<sequence length="205" mass="23180">MEVSIINVNSDKIGTIDLNPLIFSVDYRPDILKMVVNWQLSKRRAGTHKAKTIGDISGTTAKPYRQKHTGRARQGSLRSPQFRGGAVIFGPVVRNHAYSLNKKVRKLGLKVALSLKNSCNKLLILDSIDVNFVKTTQVLQFIRNFEHKSFLIIDKDYNKNVVCSCRNLHNVTLLKQIGTNVLDILRHDCIILTVGAVKYLEERLL</sequence>
<feature type="chain" id="PRO_0000242370" description="Large ribosomal subunit protein uL4">
    <location>
        <begin position="1"/>
        <end position="205"/>
    </location>
</feature>
<feature type="region of interest" description="Disordered" evidence="2">
    <location>
        <begin position="56"/>
        <end position="78"/>
    </location>
</feature>
<proteinExistence type="inferred from homology"/>